<reference key="1">
    <citation type="journal article" date="2010" name="J. Bacteriol.">
        <title>Genome sequence of the dioxin-mineralizing bacterium Sphingomonas wittichii RW1.</title>
        <authorList>
            <person name="Miller T.R."/>
            <person name="Delcher A.L."/>
            <person name="Salzberg S.L."/>
            <person name="Saunders E."/>
            <person name="Detter J.C."/>
            <person name="Halden R.U."/>
        </authorList>
    </citation>
    <scope>NUCLEOTIDE SEQUENCE [LARGE SCALE GENOMIC DNA]</scope>
    <source>
        <strain>DSM 6014 / CCUG 31198 / JCM 15750 / NBRC 105917 / EY 4224 / RW1</strain>
    </source>
</reference>
<feature type="chain" id="PRO_1000004417" description="UDP-N-acetylmuramate--L-alanine ligase">
    <location>
        <begin position="1"/>
        <end position="473"/>
    </location>
</feature>
<feature type="binding site" evidence="1">
    <location>
        <begin position="115"/>
        <end position="121"/>
    </location>
    <ligand>
        <name>ATP</name>
        <dbReference type="ChEBI" id="CHEBI:30616"/>
    </ligand>
</feature>
<evidence type="ECO:0000255" key="1">
    <source>
        <dbReference type="HAMAP-Rule" id="MF_00046"/>
    </source>
</evidence>
<keyword id="KW-0067">ATP-binding</keyword>
<keyword id="KW-0131">Cell cycle</keyword>
<keyword id="KW-0132">Cell division</keyword>
<keyword id="KW-0133">Cell shape</keyword>
<keyword id="KW-0961">Cell wall biogenesis/degradation</keyword>
<keyword id="KW-0963">Cytoplasm</keyword>
<keyword id="KW-0436">Ligase</keyword>
<keyword id="KW-0547">Nucleotide-binding</keyword>
<keyword id="KW-0573">Peptidoglycan synthesis</keyword>
<keyword id="KW-1185">Reference proteome</keyword>
<gene>
    <name evidence="1" type="primary">murC</name>
    <name type="ordered locus">Swit_3946</name>
</gene>
<protein>
    <recommendedName>
        <fullName evidence="1">UDP-N-acetylmuramate--L-alanine ligase</fullName>
        <ecNumber evidence="1">6.3.2.8</ecNumber>
    </recommendedName>
    <alternativeName>
        <fullName evidence="1">UDP-N-acetylmuramoyl-L-alanine synthetase</fullName>
    </alternativeName>
</protein>
<comment type="function">
    <text evidence="1">Cell wall formation.</text>
</comment>
<comment type="catalytic activity">
    <reaction evidence="1">
        <text>UDP-N-acetyl-alpha-D-muramate + L-alanine + ATP = UDP-N-acetyl-alpha-D-muramoyl-L-alanine + ADP + phosphate + H(+)</text>
        <dbReference type="Rhea" id="RHEA:23372"/>
        <dbReference type="ChEBI" id="CHEBI:15378"/>
        <dbReference type="ChEBI" id="CHEBI:30616"/>
        <dbReference type="ChEBI" id="CHEBI:43474"/>
        <dbReference type="ChEBI" id="CHEBI:57972"/>
        <dbReference type="ChEBI" id="CHEBI:70757"/>
        <dbReference type="ChEBI" id="CHEBI:83898"/>
        <dbReference type="ChEBI" id="CHEBI:456216"/>
        <dbReference type="EC" id="6.3.2.8"/>
    </reaction>
</comment>
<comment type="pathway">
    <text evidence="1">Cell wall biogenesis; peptidoglycan biosynthesis.</text>
</comment>
<comment type="subcellular location">
    <subcellularLocation>
        <location evidence="1">Cytoplasm</location>
    </subcellularLocation>
</comment>
<comment type="similarity">
    <text evidence="1">Belongs to the MurCDEF family.</text>
</comment>
<name>MURC_RHIWR</name>
<sequence>MKGVATDIGTIHFIGIGGIGMSGIAEVMHNLGYKVQGSDVAESYVVEGLRKRGIAVMIGHKAENLGDAAVVVTSTAIKRGNPEVELALEKRVPVVRRAEMLAELMRLKSTVAIAGTHGKTTTTSMVAALLDAGGVDPTVINGGIINSYGSNARLGASDWMVVEADESDGSFLRLDGTIAVVTNIDPEHLDHYGSFDKVKDCFVEFVENVPFYGAALLCIDHPEVQAIIPRVRDRKVVTYGFSAQADVRGDNVTPIPGGNRFDVVVRNRDGDTRRIEGVTLPMPGRHNVQNALAAIGVALEMNISDAIIATGFAKFGGVKRRFTKVGEVPVGDGVATVIDDYGHHPVEIRAVLAAAREGARAKVIAVVQPHRFTRLRDLMTEFQTAFNDADTVYVAPVYAAGEAPIDGVDAAALVAGLKQRGHRSAQVIAGPEALAATLAATIAADDMVICLGAGDITKWAAGLSEAIAKETAR</sequence>
<organism>
    <name type="scientific">Rhizorhabdus wittichii (strain DSM 6014 / CCUG 31198 / JCM 15750 / NBRC 105917 / EY 4224 / RW1)</name>
    <name type="common">Sphingomonas wittichii</name>
    <dbReference type="NCBI Taxonomy" id="392499"/>
    <lineage>
        <taxon>Bacteria</taxon>
        <taxon>Pseudomonadati</taxon>
        <taxon>Pseudomonadota</taxon>
        <taxon>Alphaproteobacteria</taxon>
        <taxon>Sphingomonadales</taxon>
        <taxon>Sphingomonadaceae</taxon>
        <taxon>Rhizorhabdus</taxon>
    </lineage>
</organism>
<proteinExistence type="inferred from homology"/>
<dbReference type="EC" id="6.3.2.8" evidence="1"/>
<dbReference type="EMBL" id="CP000699">
    <property type="protein sequence ID" value="ABQ70291.1"/>
    <property type="molecule type" value="Genomic_DNA"/>
</dbReference>
<dbReference type="SMR" id="A5VDC5"/>
<dbReference type="STRING" id="392499.Swit_3946"/>
<dbReference type="PaxDb" id="392499-Swit_3946"/>
<dbReference type="KEGG" id="swi:Swit_3946"/>
<dbReference type="eggNOG" id="COG0773">
    <property type="taxonomic scope" value="Bacteria"/>
</dbReference>
<dbReference type="HOGENOM" id="CLU_028104_2_2_5"/>
<dbReference type="OrthoDB" id="9804126at2"/>
<dbReference type="UniPathway" id="UPA00219"/>
<dbReference type="Proteomes" id="UP000001989">
    <property type="component" value="Chromosome"/>
</dbReference>
<dbReference type="GO" id="GO:0005737">
    <property type="term" value="C:cytoplasm"/>
    <property type="evidence" value="ECO:0007669"/>
    <property type="project" value="UniProtKB-SubCell"/>
</dbReference>
<dbReference type="GO" id="GO:0005524">
    <property type="term" value="F:ATP binding"/>
    <property type="evidence" value="ECO:0007669"/>
    <property type="project" value="UniProtKB-UniRule"/>
</dbReference>
<dbReference type="GO" id="GO:0008763">
    <property type="term" value="F:UDP-N-acetylmuramate-L-alanine ligase activity"/>
    <property type="evidence" value="ECO:0007669"/>
    <property type="project" value="UniProtKB-UniRule"/>
</dbReference>
<dbReference type="GO" id="GO:0051301">
    <property type="term" value="P:cell division"/>
    <property type="evidence" value="ECO:0007669"/>
    <property type="project" value="UniProtKB-KW"/>
</dbReference>
<dbReference type="GO" id="GO:0071555">
    <property type="term" value="P:cell wall organization"/>
    <property type="evidence" value="ECO:0007669"/>
    <property type="project" value="UniProtKB-KW"/>
</dbReference>
<dbReference type="GO" id="GO:0009252">
    <property type="term" value="P:peptidoglycan biosynthetic process"/>
    <property type="evidence" value="ECO:0007669"/>
    <property type="project" value="UniProtKB-UniRule"/>
</dbReference>
<dbReference type="GO" id="GO:0008360">
    <property type="term" value="P:regulation of cell shape"/>
    <property type="evidence" value="ECO:0007669"/>
    <property type="project" value="UniProtKB-KW"/>
</dbReference>
<dbReference type="Gene3D" id="3.90.190.20">
    <property type="entry name" value="Mur ligase, C-terminal domain"/>
    <property type="match status" value="1"/>
</dbReference>
<dbReference type="Gene3D" id="3.40.1190.10">
    <property type="entry name" value="Mur-like, catalytic domain"/>
    <property type="match status" value="1"/>
</dbReference>
<dbReference type="Gene3D" id="3.40.50.720">
    <property type="entry name" value="NAD(P)-binding Rossmann-like Domain"/>
    <property type="match status" value="1"/>
</dbReference>
<dbReference type="HAMAP" id="MF_00046">
    <property type="entry name" value="MurC"/>
    <property type="match status" value="1"/>
</dbReference>
<dbReference type="InterPro" id="IPR036565">
    <property type="entry name" value="Mur-like_cat_sf"/>
</dbReference>
<dbReference type="InterPro" id="IPR004101">
    <property type="entry name" value="Mur_ligase_C"/>
</dbReference>
<dbReference type="InterPro" id="IPR036615">
    <property type="entry name" value="Mur_ligase_C_dom_sf"/>
</dbReference>
<dbReference type="InterPro" id="IPR013221">
    <property type="entry name" value="Mur_ligase_cen"/>
</dbReference>
<dbReference type="InterPro" id="IPR000713">
    <property type="entry name" value="Mur_ligase_N"/>
</dbReference>
<dbReference type="InterPro" id="IPR050061">
    <property type="entry name" value="MurCDEF_pg_biosynth"/>
</dbReference>
<dbReference type="InterPro" id="IPR005758">
    <property type="entry name" value="UDP-N-AcMur_Ala_ligase_MurC"/>
</dbReference>
<dbReference type="NCBIfam" id="TIGR01082">
    <property type="entry name" value="murC"/>
    <property type="match status" value="1"/>
</dbReference>
<dbReference type="PANTHER" id="PTHR43445:SF3">
    <property type="entry name" value="UDP-N-ACETYLMURAMATE--L-ALANINE LIGASE"/>
    <property type="match status" value="1"/>
</dbReference>
<dbReference type="PANTHER" id="PTHR43445">
    <property type="entry name" value="UDP-N-ACETYLMURAMATE--L-ALANINE LIGASE-RELATED"/>
    <property type="match status" value="1"/>
</dbReference>
<dbReference type="Pfam" id="PF01225">
    <property type="entry name" value="Mur_ligase"/>
    <property type="match status" value="1"/>
</dbReference>
<dbReference type="Pfam" id="PF02875">
    <property type="entry name" value="Mur_ligase_C"/>
    <property type="match status" value="1"/>
</dbReference>
<dbReference type="Pfam" id="PF08245">
    <property type="entry name" value="Mur_ligase_M"/>
    <property type="match status" value="1"/>
</dbReference>
<dbReference type="SUPFAM" id="SSF51984">
    <property type="entry name" value="MurCD N-terminal domain"/>
    <property type="match status" value="1"/>
</dbReference>
<dbReference type="SUPFAM" id="SSF53623">
    <property type="entry name" value="MurD-like peptide ligases, catalytic domain"/>
    <property type="match status" value="1"/>
</dbReference>
<dbReference type="SUPFAM" id="SSF53244">
    <property type="entry name" value="MurD-like peptide ligases, peptide-binding domain"/>
    <property type="match status" value="1"/>
</dbReference>
<accession>A5VDC5</accession>